<reference key="1">
    <citation type="journal article" date="2003" name="Proc. Natl. Acad. Sci. U.S.A.">
        <title>The complete genome sequence of the carcinogenic bacterium Helicobacter hepaticus.</title>
        <authorList>
            <person name="Suerbaum S."/>
            <person name="Josenhans C."/>
            <person name="Sterzenbach T."/>
            <person name="Drescher B."/>
            <person name="Brandt P."/>
            <person name="Bell M."/>
            <person name="Droege M."/>
            <person name="Fartmann B."/>
            <person name="Fischer H.-P."/>
            <person name="Ge Z."/>
            <person name="Hoerster A."/>
            <person name="Holland R."/>
            <person name="Klein K."/>
            <person name="Koenig J."/>
            <person name="Macko L."/>
            <person name="Mendz G.L."/>
            <person name="Nyakatura G."/>
            <person name="Schauer D.B."/>
            <person name="Shen Z."/>
            <person name="Weber J."/>
            <person name="Frosch M."/>
            <person name="Fox J.G."/>
        </authorList>
    </citation>
    <scope>NUCLEOTIDE SEQUENCE [LARGE SCALE GENOMIC DNA]</scope>
    <source>
        <strain>ATCC 51449 / 3B1</strain>
    </source>
</reference>
<proteinExistence type="inferred from homology"/>
<gene>
    <name evidence="1" type="primary">murE</name>
    <name type="ordered locus">HH_1865</name>
</gene>
<dbReference type="EC" id="6.3.2.13" evidence="1"/>
<dbReference type="EMBL" id="AE017125">
    <property type="protein sequence ID" value="AAP78462.1"/>
    <property type="molecule type" value="Genomic_DNA"/>
</dbReference>
<dbReference type="RefSeq" id="WP_011116704.1">
    <property type="nucleotide sequence ID" value="NC_004917.1"/>
</dbReference>
<dbReference type="SMR" id="Q7VF14"/>
<dbReference type="STRING" id="235279.HH_1865"/>
<dbReference type="KEGG" id="hhe:HH_1865"/>
<dbReference type="eggNOG" id="COG0769">
    <property type="taxonomic scope" value="Bacteria"/>
</dbReference>
<dbReference type="HOGENOM" id="CLU_022291_2_0_7"/>
<dbReference type="OrthoDB" id="9800958at2"/>
<dbReference type="UniPathway" id="UPA00219"/>
<dbReference type="Proteomes" id="UP000002495">
    <property type="component" value="Chromosome"/>
</dbReference>
<dbReference type="GO" id="GO:0005737">
    <property type="term" value="C:cytoplasm"/>
    <property type="evidence" value="ECO:0007669"/>
    <property type="project" value="UniProtKB-SubCell"/>
</dbReference>
<dbReference type="GO" id="GO:0005524">
    <property type="term" value="F:ATP binding"/>
    <property type="evidence" value="ECO:0007669"/>
    <property type="project" value="UniProtKB-UniRule"/>
</dbReference>
<dbReference type="GO" id="GO:0000287">
    <property type="term" value="F:magnesium ion binding"/>
    <property type="evidence" value="ECO:0007669"/>
    <property type="project" value="UniProtKB-UniRule"/>
</dbReference>
<dbReference type="GO" id="GO:0004326">
    <property type="term" value="F:tetrahydrofolylpolyglutamate synthase activity"/>
    <property type="evidence" value="ECO:0007669"/>
    <property type="project" value="InterPro"/>
</dbReference>
<dbReference type="GO" id="GO:0008765">
    <property type="term" value="F:UDP-N-acetylmuramoylalanyl-D-glutamate-2,6-diaminopimelate ligase activity"/>
    <property type="evidence" value="ECO:0007669"/>
    <property type="project" value="UniProtKB-UniRule"/>
</dbReference>
<dbReference type="GO" id="GO:0051301">
    <property type="term" value="P:cell division"/>
    <property type="evidence" value="ECO:0007669"/>
    <property type="project" value="UniProtKB-KW"/>
</dbReference>
<dbReference type="GO" id="GO:0071555">
    <property type="term" value="P:cell wall organization"/>
    <property type="evidence" value="ECO:0007669"/>
    <property type="project" value="UniProtKB-KW"/>
</dbReference>
<dbReference type="GO" id="GO:0009252">
    <property type="term" value="P:peptidoglycan biosynthetic process"/>
    <property type="evidence" value="ECO:0007669"/>
    <property type="project" value="UniProtKB-UniRule"/>
</dbReference>
<dbReference type="GO" id="GO:0008360">
    <property type="term" value="P:regulation of cell shape"/>
    <property type="evidence" value="ECO:0007669"/>
    <property type="project" value="UniProtKB-KW"/>
</dbReference>
<dbReference type="Gene3D" id="3.90.190.20">
    <property type="entry name" value="Mur ligase, C-terminal domain"/>
    <property type="match status" value="1"/>
</dbReference>
<dbReference type="Gene3D" id="3.40.1190.10">
    <property type="entry name" value="Mur-like, catalytic domain"/>
    <property type="match status" value="1"/>
</dbReference>
<dbReference type="HAMAP" id="MF_00208">
    <property type="entry name" value="MurE"/>
    <property type="match status" value="1"/>
</dbReference>
<dbReference type="InterPro" id="IPR018109">
    <property type="entry name" value="Folylpolyglutamate_synth_CS"/>
</dbReference>
<dbReference type="InterPro" id="IPR036565">
    <property type="entry name" value="Mur-like_cat_sf"/>
</dbReference>
<dbReference type="InterPro" id="IPR004101">
    <property type="entry name" value="Mur_ligase_C"/>
</dbReference>
<dbReference type="InterPro" id="IPR036615">
    <property type="entry name" value="Mur_ligase_C_dom_sf"/>
</dbReference>
<dbReference type="InterPro" id="IPR013221">
    <property type="entry name" value="Mur_ligase_cen"/>
</dbReference>
<dbReference type="InterPro" id="IPR005761">
    <property type="entry name" value="UDP-N-AcMur-Glu-dNH2Pim_ligase"/>
</dbReference>
<dbReference type="NCBIfam" id="TIGR01085">
    <property type="entry name" value="murE"/>
    <property type="match status" value="1"/>
</dbReference>
<dbReference type="NCBIfam" id="NF001126">
    <property type="entry name" value="PRK00139.1-4"/>
    <property type="match status" value="1"/>
</dbReference>
<dbReference type="PANTHER" id="PTHR23135">
    <property type="entry name" value="MUR LIGASE FAMILY MEMBER"/>
    <property type="match status" value="1"/>
</dbReference>
<dbReference type="PANTHER" id="PTHR23135:SF4">
    <property type="entry name" value="UDP-N-ACETYLMURAMOYL-L-ALANYL-D-GLUTAMATE--2,6-DIAMINOPIMELATE LIGASE MURE HOMOLOG, CHLOROPLASTIC"/>
    <property type="match status" value="1"/>
</dbReference>
<dbReference type="Pfam" id="PF02875">
    <property type="entry name" value="Mur_ligase_C"/>
    <property type="match status" value="1"/>
</dbReference>
<dbReference type="Pfam" id="PF08245">
    <property type="entry name" value="Mur_ligase_M"/>
    <property type="match status" value="1"/>
</dbReference>
<dbReference type="SUPFAM" id="SSF53623">
    <property type="entry name" value="MurD-like peptide ligases, catalytic domain"/>
    <property type="match status" value="1"/>
</dbReference>
<dbReference type="SUPFAM" id="SSF53244">
    <property type="entry name" value="MurD-like peptide ligases, peptide-binding domain"/>
    <property type="match status" value="1"/>
</dbReference>
<sequence length="463" mass="52463">MIIKKNVSYKDRSFIALTDDTRVIESLLKGEGDKFGLQKDADTDKVLFVKNKQNKNFITPQIAQSCSMVESYELNDILMANFSHNSPNIVGITGTNGKTTTAAIIYSILLDLGFNVALLGTRGFFINEHRIKPKGLTTPSMLELYENLCIAMEQKCNFFIMEVSSHAIEQERIAGLDFALKILTNITSDHLDYHKSVEEYRRIKNSFFEGEGRKLLNADEPYIYCTDKAAYFYGIEKKGNLSVDVYALENGIDGYISWRERDYKTNEQSAIQAHLYGKHNLYNTLAAIGAVKILTQEPLERIAEALEHFGGVSGRMEVVHNMPLVIVDFAHTYDGMYQIFESFRHCKIAVVFGAGGDRDKSKRPKMGACAQQFAHKIYITSDNPRTESPKSIIEDILSGMQDGEYVFVEADRKKAIYMALESLESDEVLLILGKGDEDYQIIGNEKIYFDDREVVRNYFASRT</sequence>
<name>MURE_HELHP</name>
<organism>
    <name type="scientific">Helicobacter hepaticus (strain ATCC 51449 / 3B1)</name>
    <dbReference type="NCBI Taxonomy" id="235279"/>
    <lineage>
        <taxon>Bacteria</taxon>
        <taxon>Pseudomonadati</taxon>
        <taxon>Campylobacterota</taxon>
        <taxon>Epsilonproteobacteria</taxon>
        <taxon>Campylobacterales</taxon>
        <taxon>Helicobacteraceae</taxon>
        <taxon>Helicobacter</taxon>
    </lineage>
</organism>
<evidence type="ECO:0000255" key="1">
    <source>
        <dbReference type="HAMAP-Rule" id="MF_00208"/>
    </source>
</evidence>
<keyword id="KW-0067">ATP-binding</keyword>
<keyword id="KW-0131">Cell cycle</keyword>
<keyword id="KW-0132">Cell division</keyword>
<keyword id="KW-0133">Cell shape</keyword>
<keyword id="KW-0961">Cell wall biogenesis/degradation</keyword>
<keyword id="KW-0963">Cytoplasm</keyword>
<keyword id="KW-0436">Ligase</keyword>
<keyword id="KW-0460">Magnesium</keyword>
<keyword id="KW-0547">Nucleotide-binding</keyword>
<keyword id="KW-0573">Peptidoglycan synthesis</keyword>
<keyword id="KW-1185">Reference proteome</keyword>
<protein>
    <recommendedName>
        <fullName evidence="1">UDP-N-acetylmuramoyl-L-alanyl-D-glutamate--2,6-diaminopimelate ligase</fullName>
        <ecNumber evidence="1">6.3.2.13</ecNumber>
    </recommendedName>
    <alternativeName>
        <fullName evidence="1">Meso-A2pm-adding enzyme</fullName>
    </alternativeName>
    <alternativeName>
        <fullName evidence="1">Meso-diaminopimelate-adding enzyme</fullName>
    </alternativeName>
    <alternativeName>
        <fullName evidence="1">UDP-MurNAc-L-Ala-D-Glu:meso-diaminopimelate ligase</fullName>
    </alternativeName>
    <alternativeName>
        <fullName evidence="1">UDP-MurNAc-tripeptide synthetase</fullName>
    </alternativeName>
    <alternativeName>
        <fullName evidence="1">UDP-N-acetylmuramyl-tripeptide synthetase</fullName>
    </alternativeName>
</protein>
<feature type="chain" id="PRO_0000101901" description="UDP-N-acetylmuramoyl-L-alanyl-D-glutamate--2,6-diaminopimelate ligase">
    <location>
        <begin position="1"/>
        <end position="463"/>
    </location>
</feature>
<feature type="short sequence motif" description="Meso-diaminopimelate recognition motif">
    <location>
        <begin position="382"/>
        <end position="385"/>
    </location>
</feature>
<feature type="binding site" evidence="1">
    <location>
        <position position="21"/>
    </location>
    <ligand>
        <name>UDP-N-acetyl-alpha-D-muramoyl-L-alanyl-D-glutamate</name>
        <dbReference type="ChEBI" id="CHEBI:83900"/>
    </ligand>
</feature>
<feature type="binding site" evidence="1">
    <location>
        <begin position="94"/>
        <end position="100"/>
    </location>
    <ligand>
        <name>ATP</name>
        <dbReference type="ChEBI" id="CHEBI:30616"/>
    </ligand>
</feature>
<feature type="binding site" evidence="1">
    <location>
        <begin position="137"/>
        <end position="138"/>
    </location>
    <ligand>
        <name>UDP-N-acetyl-alpha-D-muramoyl-L-alanyl-D-glutamate</name>
        <dbReference type="ChEBI" id="CHEBI:83900"/>
    </ligand>
</feature>
<feature type="binding site" evidence="1">
    <location>
        <position position="164"/>
    </location>
    <ligand>
        <name>UDP-N-acetyl-alpha-D-muramoyl-L-alanyl-D-glutamate</name>
        <dbReference type="ChEBI" id="CHEBI:83900"/>
    </ligand>
</feature>
<feature type="binding site" evidence="1">
    <location>
        <position position="170"/>
    </location>
    <ligand>
        <name>UDP-N-acetyl-alpha-D-muramoyl-L-alanyl-D-glutamate</name>
        <dbReference type="ChEBI" id="CHEBI:83900"/>
    </ligand>
</feature>
<feature type="binding site" evidence="1">
    <location>
        <position position="172"/>
    </location>
    <ligand>
        <name>UDP-N-acetyl-alpha-D-muramoyl-L-alanyl-D-glutamate</name>
        <dbReference type="ChEBI" id="CHEBI:83900"/>
    </ligand>
</feature>
<feature type="binding site" evidence="1">
    <location>
        <position position="358"/>
    </location>
    <ligand>
        <name>meso-2,6-diaminopimelate</name>
        <dbReference type="ChEBI" id="CHEBI:57791"/>
    </ligand>
</feature>
<feature type="binding site" evidence="1">
    <location>
        <begin position="382"/>
        <end position="385"/>
    </location>
    <ligand>
        <name>meso-2,6-diaminopimelate</name>
        <dbReference type="ChEBI" id="CHEBI:57791"/>
    </ligand>
</feature>
<feature type="binding site" evidence="1">
    <location>
        <position position="433"/>
    </location>
    <ligand>
        <name>meso-2,6-diaminopimelate</name>
        <dbReference type="ChEBI" id="CHEBI:57791"/>
    </ligand>
</feature>
<feature type="binding site" evidence="1">
    <location>
        <position position="437"/>
    </location>
    <ligand>
        <name>meso-2,6-diaminopimelate</name>
        <dbReference type="ChEBI" id="CHEBI:57791"/>
    </ligand>
</feature>
<feature type="modified residue" description="N6-carboxylysine" evidence="1">
    <location>
        <position position="204"/>
    </location>
</feature>
<comment type="function">
    <text evidence="1">Catalyzes the addition of meso-diaminopimelic acid to the nucleotide precursor UDP-N-acetylmuramoyl-L-alanyl-D-glutamate (UMAG) in the biosynthesis of bacterial cell-wall peptidoglycan.</text>
</comment>
<comment type="catalytic activity">
    <reaction evidence="1">
        <text>UDP-N-acetyl-alpha-D-muramoyl-L-alanyl-D-glutamate + meso-2,6-diaminopimelate + ATP = UDP-N-acetyl-alpha-D-muramoyl-L-alanyl-gamma-D-glutamyl-meso-2,6-diaminopimelate + ADP + phosphate + H(+)</text>
        <dbReference type="Rhea" id="RHEA:23676"/>
        <dbReference type="ChEBI" id="CHEBI:15378"/>
        <dbReference type="ChEBI" id="CHEBI:30616"/>
        <dbReference type="ChEBI" id="CHEBI:43474"/>
        <dbReference type="ChEBI" id="CHEBI:57791"/>
        <dbReference type="ChEBI" id="CHEBI:83900"/>
        <dbReference type="ChEBI" id="CHEBI:83905"/>
        <dbReference type="ChEBI" id="CHEBI:456216"/>
        <dbReference type="EC" id="6.3.2.13"/>
    </reaction>
</comment>
<comment type="cofactor">
    <cofactor evidence="1">
        <name>Mg(2+)</name>
        <dbReference type="ChEBI" id="CHEBI:18420"/>
    </cofactor>
</comment>
<comment type="pathway">
    <text evidence="1">Cell wall biogenesis; peptidoglycan biosynthesis.</text>
</comment>
<comment type="subcellular location">
    <subcellularLocation>
        <location evidence="1">Cytoplasm</location>
    </subcellularLocation>
</comment>
<comment type="PTM">
    <text evidence="1">Carboxylation is probably crucial for Mg(2+) binding and, consequently, for the gamma-phosphate positioning of ATP.</text>
</comment>
<comment type="similarity">
    <text evidence="1">Belongs to the MurCDEF family. MurE subfamily.</text>
</comment>
<accession>Q7VF14</accession>